<gene>
    <name evidence="1" type="primary">aspS</name>
    <name type="ordered locus">ERGA_CDS_06890</name>
</gene>
<feature type="chain" id="PRO_0000235527" description="Aspartate--tRNA(Asp/Asn) ligase">
    <location>
        <begin position="1"/>
        <end position="590"/>
    </location>
</feature>
<feature type="region of interest" description="Aspartate" evidence="1">
    <location>
        <begin position="200"/>
        <end position="203"/>
    </location>
</feature>
<feature type="binding site" evidence="1">
    <location>
        <position position="176"/>
    </location>
    <ligand>
        <name>L-aspartate</name>
        <dbReference type="ChEBI" id="CHEBI:29991"/>
    </ligand>
</feature>
<feature type="binding site" evidence="1">
    <location>
        <begin position="222"/>
        <end position="224"/>
    </location>
    <ligand>
        <name>ATP</name>
        <dbReference type="ChEBI" id="CHEBI:30616"/>
    </ligand>
</feature>
<feature type="binding site" evidence="1">
    <location>
        <position position="222"/>
    </location>
    <ligand>
        <name>L-aspartate</name>
        <dbReference type="ChEBI" id="CHEBI:29991"/>
    </ligand>
</feature>
<feature type="binding site" evidence="1">
    <location>
        <position position="451"/>
    </location>
    <ligand>
        <name>L-aspartate</name>
        <dbReference type="ChEBI" id="CHEBI:29991"/>
    </ligand>
</feature>
<feature type="binding site" evidence="1">
    <location>
        <position position="485"/>
    </location>
    <ligand>
        <name>ATP</name>
        <dbReference type="ChEBI" id="CHEBI:30616"/>
    </ligand>
</feature>
<feature type="binding site" evidence="1">
    <location>
        <position position="492"/>
    </location>
    <ligand>
        <name>L-aspartate</name>
        <dbReference type="ChEBI" id="CHEBI:29991"/>
    </ligand>
</feature>
<feature type="binding site" evidence="1">
    <location>
        <begin position="537"/>
        <end position="540"/>
    </location>
    <ligand>
        <name>ATP</name>
        <dbReference type="ChEBI" id="CHEBI:30616"/>
    </ligand>
</feature>
<feature type="site" description="Important for tRNA non-discrimination" evidence="1">
    <location>
        <position position="33"/>
    </location>
</feature>
<comment type="function">
    <text evidence="1">Aspartyl-tRNA synthetase with relaxed tRNA specificity since it is able to aspartylate not only its cognate tRNA(Asp) but also tRNA(Asn). Reaction proceeds in two steps: L-aspartate is first activated by ATP to form Asp-AMP and then transferred to the acceptor end of tRNA(Asp/Asn).</text>
</comment>
<comment type="catalytic activity">
    <reaction evidence="1">
        <text>tRNA(Asx) + L-aspartate + ATP = L-aspartyl-tRNA(Asx) + AMP + diphosphate</text>
        <dbReference type="Rhea" id="RHEA:18349"/>
        <dbReference type="Rhea" id="RHEA-COMP:9710"/>
        <dbReference type="Rhea" id="RHEA-COMP:9711"/>
        <dbReference type="ChEBI" id="CHEBI:29991"/>
        <dbReference type="ChEBI" id="CHEBI:30616"/>
        <dbReference type="ChEBI" id="CHEBI:33019"/>
        <dbReference type="ChEBI" id="CHEBI:78442"/>
        <dbReference type="ChEBI" id="CHEBI:78516"/>
        <dbReference type="ChEBI" id="CHEBI:456215"/>
        <dbReference type="EC" id="6.1.1.23"/>
    </reaction>
</comment>
<comment type="subunit">
    <text evidence="1">Homodimer.</text>
</comment>
<comment type="subcellular location">
    <subcellularLocation>
        <location evidence="1">Cytoplasm</location>
    </subcellularLocation>
</comment>
<comment type="similarity">
    <text evidence="1">Belongs to the class-II aminoacyl-tRNA synthetase family. Type 1 subfamily.</text>
</comment>
<sequence>MNVYRTHLCNELREEHIDQTVTLSGWVYRKRDHGKIIFVDLRDHYGITQLVFNDSDTTIFQLITTLRLESVITIKGIVKARDSSTINETLDTGSIEVIVSSINIETASDILPINIASMQDYSEDIRLTYRFLDLRRDKVKNNIILRSKVITEIRKSMENMGFIEIQTPILTSSSPEGARDYLVPSRIHHGKFYALPQAPQLFKQLLMVSGFDKYFQIAPCFRDEDARADRSPGEFYQLDIEMSFVTQEDIFNIIEPLMINIFSKFSSKTINKEFPKISYHDAMLYYGSDKPDLRNPLVIQDVTEIFRDSEFKIFNSNIKQGMVVRAIPAPNTAHNPRSFFDSKIEFAKTLGAQGLGYITFIDDSLAKGPIAKFLDKDRLDNIKLICNIKAGDSVFFVSEIADKAALFAGEVRTLLGKELNLIEENTFKFCWVIDFPYFKYDHKEKSINFFHNPFSMPQGGLEALENQDPLNILAYQYDIVCNGIEISSGAIRNHKLNIMYKAFSIAGYTKEMVDEKFKALTRAFKFGAPPHGGIAPGIDRIVMLLADVPNIREVICFPLNQSGEDLLMGSPSEIDNDHLKLLSLNIIKKT</sequence>
<proteinExistence type="inferred from homology"/>
<organism>
    <name type="scientific">Ehrlichia ruminantium (strain Gardel)</name>
    <dbReference type="NCBI Taxonomy" id="302409"/>
    <lineage>
        <taxon>Bacteria</taxon>
        <taxon>Pseudomonadati</taxon>
        <taxon>Pseudomonadota</taxon>
        <taxon>Alphaproteobacteria</taxon>
        <taxon>Rickettsiales</taxon>
        <taxon>Anaplasmataceae</taxon>
        <taxon>Ehrlichia</taxon>
    </lineage>
</organism>
<accession>Q5FG09</accession>
<protein>
    <recommendedName>
        <fullName evidence="1">Aspartate--tRNA(Asp/Asn) ligase</fullName>
        <ecNumber evidence="1">6.1.1.23</ecNumber>
    </recommendedName>
    <alternativeName>
        <fullName evidence="1">Aspartyl-tRNA synthetase</fullName>
        <shortName evidence="1">AspRS</shortName>
    </alternativeName>
    <alternativeName>
        <fullName evidence="1">Non-discriminating aspartyl-tRNA synthetase</fullName>
        <shortName evidence="1">ND-AspRS</shortName>
    </alternativeName>
</protein>
<dbReference type="EC" id="6.1.1.23" evidence="1"/>
<dbReference type="EMBL" id="CR925677">
    <property type="protein sequence ID" value="CAI28141.1"/>
    <property type="molecule type" value="Genomic_DNA"/>
</dbReference>
<dbReference type="RefSeq" id="WP_011255774.1">
    <property type="nucleotide sequence ID" value="NC_006831.1"/>
</dbReference>
<dbReference type="SMR" id="Q5FG09"/>
<dbReference type="KEGG" id="erg:ERGA_CDS_06890"/>
<dbReference type="HOGENOM" id="CLU_014330_3_2_5"/>
<dbReference type="OrthoDB" id="9802326at2"/>
<dbReference type="Proteomes" id="UP000000533">
    <property type="component" value="Chromosome"/>
</dbReference>
<dbReference type="GO" id="GO:0005737">
    <property type="term" value="C:cytoplasm"/>
    <property type="evidence" value="ECO:0007669"/>
    <property type="project" value="UniProtKB-SubCell"/>
</dbReference>
<dbReference type="GO" id="GO:0004815">
    <property type="term" value="F:aspartate-tRNA ligase activity"/>
    <property type="evidence" value="ECO:0007669"/>
    <property type="project" value="UniProtKB-UniRule"/>
</dbReference>
<dbReference type="GO" id="GO:0050560">
    <property type="term" value="F:aspartate-tRNA(Asn) ligase activity"/>
    <property type="evidence" value="ECO:0007669"/>
    <property type="project" value="UniProtKB-EC"/>
</dbReference>
<dbReference type="GO" id="GO:0005524">
    <property type="term" value="F:ATP binding"/>
    <property type="evidence" value="ECO:0007669"/>
    <property type="project" value="UniProtKB-UniRule"/>
</dbReference>
<dbReference type="GO" id="GO:0003676">
    <property type="term" value="F:nucleic acid binding"/>
    <property type="evidence" value="ECO:0007669"/>
    <property type="project" value="InterPro"/>
</dbReference>
<dbReference type="GO" id="GO:0006422">
    <property type="term" value="P:aspartyl-tRNA aminoacylation"/>
    <property type="evidence" value="ECO:0007669"/>
    <property type="project" value="UniProtKB-UniRule"/>
</dbReference>
<dbReference type="CDD" id="cd00777">
    <property type="entry name" value="AspRS_core"/>
    <property type="match status" value="1"/>
</dbReference>
<dbReference type="CDD" id="cd04317">
    <property type="entry name" value="EcAspRS_like_N"/>
    <property type="match status" value="1"/>
</dbReference>
<dbReference type="Gene3D" id="3.30.930.10">
    <property type="entry name" value="Bira Bifunctional Protein, Domain 2"/>
    <property type="match status" value="1"/>
</dbReference>
<dbReference type="Gene3D" id="3.30.1360.30">
    <property type="entry name" value="GAD-like domain"/>
    <property type="match status" value="1"/>
</dbReference>
<dbReference type="Gene3D" id="2.40.50.140">
    <property type="entry name" value="Nucleic acid-binding proteins"/>
    <property type="match status" value="1"/>
</dbReference>
<dbReference type="HAMAP" id="MF_00044">
    <property type="entry name" value="Asp_tRNA_synth_type1"/>
    <property type="match status" value="1"/>
</dbReference>
<dbReference type="InterPro" id="IPR004364">
    <property type="entry name" value="Aa-tRNA-synt_II"/>
</dbReference>
<dbReference type="InterPro" id="IPR006195">
    <property type="entry name" value="aa-tRNA-synth_II"/>
</dbReference>
<dbReference type="InterPro" id="IPR045864">
    <property type="entry name" value="aa-tRNA-synth_II/BPL/LPL"/>
</dbReference>
<dbReference type="InterPro" id="IPR004524">
    <property type="entry name" value="Asp-tRNA-ligase_1"/>
</dbReference>
<dbReference type="InterPro" id="IPR047089">
    <property type="entry name" value="Asp-tRNA-ligase_1_N"/>
</dbReference>
<dbReference type="InterPro" id="IPR002312">
    <property type="entry name" value="Asp/Asn-tRNA-synth_IIb"/>
</dbReference>
<dbReference type="InterPro" id="IPR047090">
    <property type="entry name" value="AspRS_core"/>
</dbReference>
<dbReference type="InterPro" id="IPR004115">
    <property type="entry name" value="GAD-like_sf"/>
</dbReference>
<dbReference type="InterPro" id="IPR029351">
    <property type="entry name" value="GAD_dom"/>
</dbReference>
<dbReference type="InterPro" id="IPR012340">
    <property type="entry name" value="NA-bd_OB-fold"/>
</dbReference>
<dbReference type="InterPro" id="IPR004365">
    <property type="entry name" value="NA-bd_OB_tRNA"/>
</dbReference>
<dbReference type="NCBIfam" id="TIGR00459">
    <property type="entry name" value="aspS_bact"/>
    <property type="match status" value="1"/>
</dbReference>
<dbReference type="NCBIfam" id="NF001750">
    <property type="entry name" value="PRK00476.1"/>
    <property type="match status" value="1"/>
</dbReference>
<dbReference type="PANTHER" id="PTHR22594:SF5">
    <property type="entry name" value="ASPARTATE--TRNA LIGASE, MITOCHONDRIAL"/>
    <property type="match status" value="1"/>
</dbReference>
<dbReference type="PANTHER" id="PTHR22594">
    <property type="entry name" value="ASPARTYL/LYSYL-TRNA SYNTHETASE"/>
    <property type="match status" value="1"/>
</dbReference>
<dbReference type="Pfam" id="PF02938">
    <property type="entry name" value="GAD"/>
    <property type="match status" value="1"/>
</dbReference>
<dbReference type="Pfam" id="PF00152">
    <property type="entry name" value="tRNA-synt_2"/>
    <property type="match status" value="1"/>
</dbReference>
<dbReference type="Pfam" id="PF01336">
    <property type="entry name" value="tRNA_anti-codon"/>
    <property type="match status" value="1"/>
</dbReference>
<dbReference type="PRINTS" id="PR01042">
    <property type="entry name" value="TRNASYNTHASP"/>
</dbReference>
<dbReference type="SUPFAM" id="SSF55681">
    <property type="entry name" value="Class II aaRS and biotin synthetases"/>
    <property type="match status" value="1"/>
</dbReference>
<dbReference type="SUPFAM" id="SSF55261">
    <property type="entry name" value="GAD domain-like"/>
    <property type="match status" value="1"/>
</dbReference>
<dbReference type="SUPFAM" id="SSF50249">
    <property type="entry name" value="Nucleic acid-binding proteins"/>
    <property type="match status" value="1"/>
</dbReference>
<dbReference type="PROSITE" id="PS50862">
    <property type="entry name" value="AA_TRNA_LIGASE_II"/>
    <property type="match status" value="1"/>
</dbReference>
<evidence type="ECO:0000255" key="1">
    <source>
        <dbReference type="HAMAP-Rule" id="MF_00044"/>
    </source>
</evidence>
<keyword id="KW-0030">Aminoacyl-tRNA synthetase</keyword>
<keyword id="KW-0067">ATP-binding</keyword>
<keyword id="KW-0963">Cytoplasm</keyword>
<keyword id="KW-0436">Ligase</keyword>
<keyword id="KW-0547">Nucleotide-binding</keyword>
<keyword id="KW-0648">Protein biosynthesis</keyword>
<reference key="1">
    <citation type="journal article" date="2006" name="J. Bacteriol.">
        <title>Comparative genomic analysis of three strains of Ehrlichia ruminantium reveals an active process of genome size plasticity.</title>
        <authorList>
            <person name="Frutos R."/>
            <person name="Viari A."/>
            <person name="Ferraz C."/>
            <person name="Morgat A."/>
            <person name="Eychenie S."/>
            <person name="Kandassamy Y."/>
            <person name="Chantal I."/>
            <person name="Bensaid A."/>
            <person name="Coissac E."/>
            <person name="Vachiery N."/>
            <person name="Demaille J."/>
            <person name="Martinez D."/>
        </authorList>
    </citation>
    <scope>NUCLEOTIDE SEQUENCE [LARGE SCALE GENOMIC DNA]</scope>
    <source>
        <strain>Gardel</strain>
    </source>
</reference>
<name>SYDND_EHRRG</name>